<proteinExistence type="inferred from homology"/>
<reference key="1">
    <citation type="submission" date="2006-12" db="EMBL/GenBank/DDBJ databases">
        <title>Bifidobacterium adolescentis complete genome sequence.</title>
        <authorList>
            <person name="Suzuki T."/>
            <person name="Tsuda Y."/>
            <person name="Kanou N."/>
            <person name="Inoue T."/>
            <person name="Kumazaki K."/>
            <person name="Nagano S."/>
            <person name="Hirai S."/>
            <person name="Tanaka K."/>
            <person name="Watanabe K."/>
        </authorList>
    </citation>
    <scope>NUCLEOTIDE SEQUENCE [LARGE SCALE GENOMIC DNA]</scope>
    <source>
        <strain>ATCC 15703 / DSM 20083 / NCTC 11814 / E194a</strain>
    </source>
</reference>
<protein>
    <recommendedName>
        <fullName evidence="1">Phosphoribosyl-ATP pyrophosphatase</fullName>
        <shortName evidence="1">PRA-PH</shortName>
        <ecNumber evidence="1">3.6.1.31</ecNumber>
    </recommendedName>
</protein>
<comment type="catalytic activity">
    <reaction evidence="1">
        <text>1-(5-phospho-beta-D-ribosyl)-ATP + H2O = 1-(5-phospho-beta-D-ribosyl)-5'-AMP + diphosphate + H(+)</text>
        <dbReference type="Rhea" id="RHEA:22828"/>
        <dbReference type="ChEBI" id="CHEBI:15377"/>
        <dbReference type="ChEBI" id="CHEBI:15378"/>
        <dbReference type="ChEBI" id="CHEBI:33019"/>
        <dbReference type="ChEBI" id="CHEBI:59457"/>
        <dbReference type="ChEBI" id="CHEBI:73183"/>
        <dbReference type="EC" id="3.6.1.31"/>
    </reaction>
</comment>
<comment type="pathway">
    <text evidence="1">Amino-acid biosynthesis; L-histidine biosynthesis; L-histidine from 5-phospho-alpha-D-ribose 1-diphosphate: step 2/9.</text>
</comment>
<comment type="subcellular location">
    <subcellularLocation>
        <location evidence="1">Cytoplasm</location>
    </subcellularLocation>
</comment>
<comment type="similarity">
    <text evidence="1">Belongs to the PRA-PH family.</text>
</comment>
<comment type="sequence caution" evidence="2">
    <conflict type="erroneous initiation">
        <sequence resource="EMBL-CDS" id="BAF39575"/>
    </conflict>
</comment>
<feature type="chain" id="PRO_0000319641" description="Phosphoribosyl-ATP pyrophosphatase">
    <location>
        <begin position="1"/>
        <end position="87"/>
    </location>
</feature>
<name>HIS2_BIFAA</name>
<keyword id="KW-0028">Amino-acid biosynthesis</keyword>
<keyword id="KW-0067">ATP-binding</keyword>
<keyword id="KW-0963">Cytoplasm</keyword>
<keyword id="KW-0368">Histidine biosynthesis</keyword>
<keyword id="KW-0378">Hydrolase</keyword>
<keyword id="KW-0547">Nucleotide-binding</keyword>
<keyword id="KW-1185">Reference proteome</keyword>
<evidence type="ECO:0000255" key="1">
    <source>
        <dbReference type="HAMAP-Rule" id="MF_01020"/>
    </source>
</evidence>
<evidence type="ECO:0000305" key="2"/>
<dbReference type="EC" id="3.6.1.31" evidence="1"/>
<dbReference type="EMBL" id="AP009256">
    <property type="protein sequence ID" value="BAF39575.1"/>
    <property type="status" value="ALT_INIT"/>
    <property type="molecule type" value="Genomic_DNA"/>
</dbReference>
<dbReference type="RefSeq" id="WP_003809305.1">
    <property type="nucleotide sequence ID" value="NZ_CAXVKE010000001.1"/>
</dbReference>
<dbReference type="SMR" id="A1A1J2"/>
<dbReference type="STRING" id="367928.BAD_0794"/>
<dbReference type="PaxDb" id="1680-BADO_0843"/>
<dbReference type="GeneID" id="4556154"/>
<dbReference type="KEGG" id="bad:BAD_0794"/>
<dbReference type="HOGENOM" id="CLU_123337_2_1_11"/>
<dbReference type="UniPathway" id="UPA00031">
    <property type="reaction ID" value="UER00007"/>
</dbReference>
<dbReference type="Proteomes" id="UP000008702">
    <property type="component" value="Chromosome"/>
</dbReference>
<dbReference type="GO" id="GO:0005737">
    <property type="term" value="C:cytoplasm"/>
    <property type="evidence" value="ECO:0007669"/>
    <property type="project" value="UniProtKB-SubCell"/>
</dbReference>
<dbReference type="GO" id="GO:0005524">
    <property type="term" value="F:ATP binding"/>
    <property type="evidence" value="ECO:0007669"/>
    <property type="project" value="UniProtKB-KW"/>
</dbReference>
<dbReference type="GO" id="GO:0004636">
    <property type="term" value="F:phosphoribosyl-ATP diphosphatase activity"/>
    <property type="evidence" value="ECO:0007669"/>
    <property type="project" value="UniProtKB-UniRule"/>
</dbReference>
<dbReference type="GO" id="GO:0000105">
    <property type="term" value="P:L-histidine biosynthetic process"/>
    <property type="evidence" value="ECO:0007669"/>
    <property type="project" value="UniProtKB-UniRule"/>
</dbReference>
<dbReference type="CDD" id="cd11547">
    <property type="entry name" value="NTP-PPase_HisE"/>
    <property type="match status" value="1"/>
</dbReference>
<dbReference type="Gene3D" id="1.10.287.1080">
    <property type="entry name" value="MazG-like"/>
    <property type="match status" value="1"/>
</dbReference>
<dbReference type="HAMAP" id="MF_01020">
    <property type="entry name" value="HisE"/>
    <property type="match status" value="1"/>
</dbReference>
<dbReference type="InterPro" id="IPR008179">
    <property type="entry name" value="HisE"/>
</dbReference>
<dbReference type="InterPro" id="IPR021130">
    <property type="entry name" value="PRib-ATP_PPHydrolase-like"/>
</dbReference>
<dbReference type="NCBIfam" id="TIGR03188">
    <property type="entry name" value="histidine_hisI"/>
    <property type="match status" value="1"/>
</dbReference>
<dbReference type="NCBIfam" id="NF001610">
    <property type="entry name" value="PRK00400.1-1"/>
    <property type="match status" value="1"/>
</dbReference>
<dbReference type="PANTHER" id="PTHR42945">
    <property type="entry name" value="HISTIDINE BIOSYNTHESIS BIFUNCTIONAL PROTEIN"/>
    <property type="match status" value="1"/>
</dbReference>
<dbReference type="PANTHER" id="PTHR42945:SF1">
    <property type="entry name" value="HISTIDINE BIOSYNTHESIS BIFUNCTIONAL PROTEIN HIS7"/>
    <property type="match status" value="1"/>
</dbReference>
<dbReference type="Pfam" id="PF01503">
    <property type="entry name" value="PRA-PH"/>
    <property type="match status" value="1"/>
</dbReference>
<dbReference type="SUPFAM" id="SSF101386">
    <property type="entry name" value="all-alpha NTP pyrophosphatases"/>
    <property type="match status" value="1"/>
</dbReference>
<organism>
    <name type="scientific">Bifidobacterium adolescentis (strain ATCC 15703 / DSM 20083 / NCTC 11814 / E194a)</name>
    <dbReference type="NCBI Taxonomy" id="367928"/>
    <lineage>
        <taxon>Bacteria</taxon>
        <taxon>Bacillati</taxon>
        <taxon>Actinomycetota</taxon>
        <taxon>Actinomycetes</taxon>
        <taxon>Bifidobacteriales</taxon>
        <taxon>Bifidobacteriaceae</taxon>
        <taxon>Bifidobacterium</taxon>
    </lineage>
</organism>
<sequence length="87" mass="9756">MKTFESLFAELSEKAATKQAGSLTVDELAKGTHFIGKKIVEEAGETWIAAEYEGADRTAEEMSQLIYHLQVMMIDRGITLEDIYKNL</sequence>
<accession>A1A1J2</accession>
<gene>
    <name evidence="1" type="primary">hisE</name>
    <name type="ordered locus">BAD_0794</name>
</gene>